<accession>P68638</accession>
<accession>P10998</accession>
<accession>Q76ZY4</accession>
<feature type="signal peptide" evidence="4">
    <location>
        <begin position="1"/>
        <end position="19"/>
    </location>
</feature>
<feature type="chain" id="PRO_0000006024" description="Complement control protein C3">
    <location>
        <begin position="20"/>
        <end position="263"/>
    </location>
</feature>
<feature type="domain" description="Sushi 1" evidence="1">
    <location>
        <begin position="20"/>
        <end position="83"/>
    </location>
</feature>
<feature type="domain" description="Sushi 2" evidence="1">
    <location>
        <begin position="84"/>
        <end position="145"/>
    </location>
</feature>
<feature type="domain" description="Sushi 3" evidence="1">
    <location>
        <begin position="146"/>
        <end position="203"/>
    </location>
</feature>
<feature type="domain" description="Sushi 4" evidence="1">
    <location>
        <begin position="204"/>
        <end position="263"/>
    </location>
</feature>
<feature type="disulfide bond" description="Interchain (with C-162 in protein A56)" evidence="1">
    <location>
        <position position="20"/>
    </location>
</feature>
<feature type="disulfide bond" evidence="1">
    <location>
        <begin position="21"/>
        <end position="70"/>
    </location>
</feature>
<feature type="disulfide bond" evidence="1">
    <location>
        <begin position="54"/>
        <end position="81"/>
    </location>
</feature>
<feature type="disulfide bond" evidence="1">
    <location>
        <begin position="86"/>
        <end position="126"/>
    </location>
</feature>
<feature type="disulfide bond" evidence="1">
    <location>
        <begin position="112"/>
        <end position="143"/>
    </location>
</feature>
<feature type="disulfide bond" evidence="1">
    <location>
        <begin position="148"/>
        <end position="190"/>
    </location>
</feature>
<feature type="disulfide bond" evidence="1">
    <location>
        <begin position="176"/>
        <end position="201"/>
    </location>
</feature>
<feature type="disulfide bond" evidence="1">
    <location>
        <begin position="206"/>
        <end position="248"/>
    </location>
</feature>
<feature type="disulfide bond" evidence="1">
    <location>
        <begin position="234"/>
        <end position="261"/>
    </location>
</feature>
<feature type="strand" evidence="6">
    <location>
        <begin position="157"/>
        <end position="159"/>
    </location>
</feature>
<feature type="strand" evidence="6">
    <location>
        <begin position="168"/>
        <end position="170"/>
    </location>
</feature>
<feature type="strand" evidence="6">
    <location>
        <begin position="174"/>
        <end position="176"/>
    </location>
</feature>
<feature type="strand" evidence="6">
    <location>
        <begin position="181"/>
        <end position="184"/>
    </location>
</feature>
<feature type="strand" evidence="8">
    <location>
        <begin position="189"/>
        <end position="193"/>
    </location>
</feature>
<feature type="strand" evidence="7">
    <location>
        <begin position="195"/>
        <end position="197"/>
    </location>
</feature>
<feature type="strand" evidence="6">
    <location>
        <begin position="200"/>
        <end position="202"/>
    </location>
</feature>
<feature type="strand" evidence="6">
    <location>
        <begin position="229"/>
        <end position="232"/>
    </location>
</feature>
<feature type="strand" evidence="6">
    <location>
        <begin position="235"/>
        <end position="237"/>
    </location>
</feature>
<feature type="strand" evidence="6">
    <location>
        <begin position="239"/>
        <end position="242"/>
    </location>
</feature>
<feature type="strand" evidence="6">
    <location>
        <begin position="244"/>
        <end position="247"/>
    </location>
</feature>
<feature type="turn" evidence="6">
    <location>
        <begin position="250"/>
        <end position="252"/>
    </location>
</feature>
<proteinExistence type="evidence at protein level"/>
<protein>
    <recommendedName>
        <fullName>Complement control protein C3</fullName>
    </recommendedName>
    <alternativeName>
        <fullName>28 kDa protein</fullName>
    </alternativeName>
    <alternativeName>
        <fullName>Secretory protein 35</fullName>
        <shortName>Protein C3</shortName>
    </alternativeName>
    <alternativeName>
        <fullName>VCP</fullName>
    </alternativeName>
</protein>
<reference key="1">
    <citation type="journal article" date="1988" name="Nature">
        <title>Vaccinia virus encodes a secretory polypeptide structurally related to complement control proteins.</title>
        <authorList>
            <person name="Kotwal G.J."/>
            <person name="Moss B."/>
        </authorList>
    </citation>
    <scope>NUCLEOTIDE SEQUENCE [GENOMIC DNA]</scope>
    <scope>PROTEIN SEQUENCE OF 20-37</scope>
</reference>
<reference key="2">
    <citation type="journal article" date="1988" name="Virology">
        <title>Analysis of a large cluster of nonessential genes deleted from a vaccinia virus terminal transposition mutant.</title>
        <authorList>
            <person name="Kotwal G.J."/>
            <person name="Moss B."/>
        </authorList>
    </citation>
    <scope>NUCLEOTIDE SEQUENCE [GENOMIC DNA]</scope>
</reference>
<reference key="3">
    <citation type="submission" date="2003-02" db="EMBL/GenBank/DDBJ databases">
        <title>Sequencing of the coding region of Vaccinia-WR to an average 9-fold redundancy and an error rate of 0.16/10kb.</title>
        <authorList>
            <person name="Esposito J.J."/>
            <person name="Frace A.M."/>
            <person name="Sammons S.A."/>
            <person name="Olsen-Rasmussen M."/>
            <person name="Osborne J."/>
            <person name="Wohlhueter R."/>
        </authorList>
    </citation>
    <scope>NUCLEOTIDE SEQUENCE [LARGE SCALE GENOMIC DNA]</scope>
</reference>
<reference key="4">
    <citation type="journal article" date="1992" name="Proc. Natl. Acad. Sci. U.S.A.">
        <title>Vaccinia virus complement-control protein prevents antibody-dependent complement-enhanced neutralization of infectivity and contributes to virulence.</title>
        <authorList>
            <person name="Isaacs S.N."/>
            <person name="Kotwal G.J."/>
            <person name="Moss B."/>
        </authorList>
    </citation>
    <scope>FUNCTION</scope>
</reference>
<reference key="5">
    <citation type="journal article" date="2008" name="J. Virol.">
        <title>Cell surface expression of the vaccinia virus complement control protein is mediated by interaction with the viral A56 protein and protects infected cells from complement attack.</title>
        <authorList>
            <person name="Girgis N.M."/>
            <person name="Dehaven B.C."/>
            <person name="Fan X."/>
            <person name="Viner K.M."/>
            <person name="Shamim M."/>
            <person name="Isaacs S.N."/>
        </authorList>
    </citation>
    <scope>FUNCTION</scope>
    <scope>SUBCELLULAR LOCATION</scope>
</reference>
<reference key="6">
    <citation type="journal article" date="2010" name="J. Virol.">
        <title>Poxvirus complement control proteins are expressed on the cell surface through an intermolecular disulfide bridge with the viral A56 protein.</title>
        <authorList>
            <person name="DeHaven B.C."/>
            <person name="Girgis N.M."/>
            <person name="Xiao Y."/>
            <person name="Hudson P.N."/>
            <person name="Olson V.A."/>
            <person name="Damon I.K."/>
            <person name="Isaacs S.N."/>
        </authorList>
    </citation>
    <scope>INTERMOLECULAR DISULFIDE BOND</scope>
</reference>
<reference key="7">
    <citation type="journal article" date="2011" name="J. Gen. Virol.">
        <title>The vaccinia virus A56 protein: a multifunctional transmembrane glycoprotein that anchors two secreted viral proteins.</title>
        <authorList>
            <person name="Dehaven B.C."/>
            <person name="Gupta K."/>
            <person name="Isaacs S.N."/>
        </authorList>
    </citation>
    <scope>INTERACTION WITH A56</scope>
    <scope>SUBCELLULAR LOCATION</scope>
</reference>
<reference key="8">
    <citation type="journal article" date="1997" name="J. Mol. Biol.">
        <title>NMR studies of a viral protein that mimics the regulators of complement activation.</title>
        <authorList>
            <person name="Wiles A.P."/>
            <person name="Shaw G."/>
            <person name="Bright J."/>
            <person name="Perczel A."/>
            <person name="Campbell I.D."/>
            <person name="Barlow P.N."/>
        </authorList>
    </citation>
    <scope>STRUCTURE BY NMR OF 146-263</scope>
    <scope>IDENTIFICATION BY MASS SPECTROMETRY</scope>
</reference>
<sequence>MKVESVTFLTLLGIGCVLSCCTIPSRPINMKFKNSVETDANANYNIGDTIEYLCLPGYRKQKMGPIYAKCTGTGWTLFNQCIKRRCPSPRDIDNGQLDIGGVDFGSSITYSCNSGYHLIGESKSYCELGSTGSMVWNPEAPICESVKCQSPPSISNGRHNGYEDFYTDGSVVTYSCNSGYSLIGNSGVLCSGGEWSDPPTCQIVKCPHPTISNGYLSSGFKRSYSYNDNVDFKCKYGYKLSGSSSSTCSPGNTWKPELPKCVR</sequence>
<dbReference type="EMBL" id="X13166">
    <property type="protein sequence ID" value="CAA31564.1"/>
    <property type="molecule type" value="Genomic_DNA"/>
</dbReference>
<dbReference type="EMBL" id="M22812">
    <property type="protein sequence ID" value="AAA69605.1"/>
    <property type="molecule type" value="Genomic_DNA"/>
</dbReference>
<dbReference type="EMBL" id="AY243312">
    <property type="protein sequence ID" value="AAO89304.1"/>
    <property type="molecule type" value="Genomic_DNA"/>
</dbReference>
<dbReference type="PIR" id="A31005">
    <property type="entry name" value="WMVZSP"/>
</dbReference>
<dbReference type="RefSeq" id="YP_232907.1">
    <property type="nucleotide sequence ID" value="NC_006998.1"/>
</dbReference>
<dbReference type="PDB" id="1VVC">
    <property type="method" value="NMR"/>
    <property type="chains" value="A=146-263"/>
</dbReference>
<dbReference type="PDB" id="1VVD">
    <property type="method" value="NMR"/>
    <property type="chains" value="A=146-263"/>
</dbReference>
<dbReference type="PDB" id="1VVE">
    <property type="method" value="NMR"/>
    <property type="chains" value="A=146-263"/>
</dbReference>
<dbReference type="PDBsum" id="1VVC"/>
<dbReference type="PDBsum" id="1VVD"/>
<dbReference type="PDBsum" id="1VVE"/>
<dbReference type="SMR" id="P68638"/>
<dbReference type="IntAct" id="P68638">
    <property type="interactions" value="1"/>
</dbReference>
<dbReference type="MINT" id="P68638"/>
<dbReference type="DrugBank" id="DB03959">
    <property type="generic name" value="N,O6-Disulfo-Glucosamine"/>
</dbReference>
<dbReference type="DrugBank" id="DB02264">
    <property type="generic name" value="O2-Sulfo-Glucuronic Acid"/>
</dbReference>
<dbReference type="DrugBank" id="DB04786">
    <property type="generic name" value="Suramin"/>
</dbReference>
<dbReference type="ABCD" id="P68638">
    <property type="antibodies" value="4 sequenced antibodies"/>
</dbReference>
<dbReference type="DNASU" id="3707640"/>
<dbReference type="GeneID" id="3707640"/>
<dbReference type="KEGG" id="vg:3707640"/>
<dbReference type="EvolutionaryTrace" id="P68638"/>
<dbReference type="Proteomes" id="UP000000344">
    <property type="component" value="Genome"/>
</dbReference>
<dbReference type="GO" id="GO:0005576">
    <property type="term" value="C:extracellular region"/>
    <property type="evidence" value="ECO:0007669"/>
    <property type="project" value="UniProtKB-SubCell"/>
</dbReference>
<dbReference type="GO" id="GO:0020002">
    <property type="term" value="C:host cell plasma membrane"/>
    <property type="evidence" value="ECO:0007669"/>
    <property type="project" value="UniProtKB-SubCell"/>
</dbReference>
<dbReference type="GO" id="GO:0016020">
    <property type="term" value="C:membrane"/>
    <property type="evidence" value="ECO:0007669"/>
    <property type="project" value="UniProtKB-KW"/>
</dbReference>
<dbReference type="GO" id="GO:0055036">
    <property type="term" value="C:virion membrane"/>
    <property type="evidence" value="ECO:0007669"/>
    <property type="project" value="UniProtKB-SubCell"/>
</dbReference>
<dbReference type="GO" id="GO:0001848">
    <property type="term" value="F:complement binding"/>
    <property type="evidence" value="ECO:0007669"/>
    <property type="project" value="InterPro"/>
</dbReference>
<dbReference type="GO" id="GO:0045916">
    <property type="term" value="P:negative regulation of complement activation"/>
    <property type="evidence" value="ECO:0007669"/>
    <property type="project" value="InterPro"/>
</dbReference>
<dbReference type="GO" id="GO:0042784">
    <property type="term" value="P:symbiont-mediated suppression of host complement activation"/>
    <property type="evidence" value="ECO:0007669"/>
    <property type="project" value="UniProtKB-KW"/>
</dbReference>
<dbReference type="CDD" id="cd00033">
    <property type="entry name" value="CCP"/>
    <property type="match status" value="4"/>
</dbReference>
<dbReference type="FunFam" id="2.10.70.10:FF:000014">
    <property type="entry name" value="Membrane cofactor protein"/>
    <property type="match status" value="1"/>
</dbReference>
<dbReference type="Gene3D" id="2.10.70.10">
    <property type="entry name" value="Complement Module, domain 1"/>
    <property type="match status" value="4"/>
</dbReference>
<dbReference type="InterPro" id="IPR011176">
    <property type="entry name" value="CCP_VACV_C3/B5"/>
</dbReference>
<dbReference type="InterPro" id="IPR051277">
    <property type="entry name" value="SEZ6_CSMD_C4BPB_Regulators"/>
</dbReference>
<dbReference type="InterPro" id="IPR035976">
    <property type="entry name" value="Sushi/SCR/CCP_sf"/>
</dbReference>
<dbReference type="InterPro" id="IPR000436">
    <property type="entry name" value="Sushi_SCR_CCP_dom"/>
</dbReference>
<dbReference type="PANTHER" id="PTHR45656">
    <property type="entry name" value="PROTEIN CBR-CLEC-78"/>
    <property type="match status" value="1"/>
</dbReference>
<dbReference type="PANTHER" id="PTHR45656:SF4">
    <property type="entry name" value="PROTEIN CBR-CLEC-78"/>
    <property type="match status" value="1"/>
</dbReference>
<dbReference type="Pfam" id="PF00084">
    <property type="entry name" value="Sushi"/>
    <property type="match status" value="4"/>
</dbReference>
<dbReference type="PIRSF" id="PIRSF002486">
    <property type="entry name" value="CIP_VAC_C3L"/>
    <property type="match status" value="1"/>
</dbReference>
<dbReference type="SMART" id="SM00032">
    <property type="entry name" value="CCP"/>
    <property type="match status" value="4"/>
</dbReference>
<dbReference type="SUPFAM" id="SSF57535">
    <property type="entry name" value="Complement control module/SCR domain"/>
    <property type="match status" value="4"/>
</dbReference>
<dbReference type="PROSITE" id="PS50923">
    <property type="entry name" value="SUSHI"/>
    <property type="match status" value="4"/>
</dbReference>
<evidence type="ECO:0000255" key="1">
    <source>
        <dbReference type="PROSITE-ProRule" id="PRU00302"/>
    </source>
</evidence>
<evidence type="ECO:0000269" key="2">
    <source>
    </source>
</evidence>
<evidence type="ECO:0000269" key="3">
    <source>
    </source>
</evidence>
<evidence type="ECO:0000269" key="4">
    <source>
    </source>
</evidence>
<evidence type="ECO:0000305" key="5"/>
<evidence type="ECO:0007829" key="6">
    <source>
        <dbReference type="PDB" id="1VVC"/>
    </source>
</evidence>
<evidence type="ECO:0007829" key="7">
    <source>
        <dbReference type="PDB" id="1VVD"/>
    </source>
</evidence>
<evidence type="ECO:0007829" key="8">
    <source>
        <dbReference type="PDB" id="1VVE"/>
    </source>
</evidence>
<keyword id="KW-0002">3D-structure</keyword>
<keyword id="KW-0903">Direct protein sequencing</keyword>
<keyword id="KW-1015">Disulfide bond</keyword>
<keyword id="KW-1032">Host cell membrane</keyword>
<keyword id="KW-1043">Host membrane</keyword>
<keyword id="KW-0945">Host-virus interaction</keyword>
<keyword id="KW-1087">Inhibition of host complement factors by virus</keyword>
<keyword id="KW-0472">Membrane</keyword>
<keyword id="KW-1185">Reference proteome</keyword>
<keyword id="KW-0677">Repeat</keyword>
<keyword id="KW-0964">Secreted</keyword>
<keyword id="KW-0732">Signal</keyword>
<keyword id="KW-0768">Sushi</keyword>
<keyword id="KW-0899">Viral immunoevasion</keyword>
<keyword id="KW-0946">Virion</keyword>
<gene>
    <name type="ordered locus">VACWR025</name>
    <name type="ORF">C3L</name>
</gene>
<name>VCP_VACCW</name>
<comment type="function">
    <text evidence="2 3">Serves to protect the virus against complement attack by inhibiting both classical and alternative pathways of complement activation. Binds C3b and C4b.</text>
</comment>
<comment type="subunit">
    <text>Heterodimer with A56 protein; disulfide-linked.</text>
</comment>
<comment type="subcellular location">
    <subcellularLocation>
        <location evidence="5">Virion membrane</location>
        <topology evidence="5">Peripheral membrane protein</topology>
    </subcellularLocation>
    <subcellularLocation>
        <location evidence="5">Host cell membrane</location>
        <topology evidence="5">Peripheral membrane protein</topology>
        <orientation evidence="5">Extracellular side</orientation>
    </subcellularLocation>
    <subcellularLocation>
        <location evidence="5">Secreted</location>
    </subcellularLocation>
    <text>Component of extracellular enveloped virus (EEV) but not intracellular mature virus (IMV). Anchored to the surface of the outermost membrane of EEV via its interaction with A56 protein.</text>
</comment>
<comment type="similarity">
    <text evidence="5">Belongs to the receptors of complement activation (RCA) family.</text>
</comment>
<organismHost>
    <name type="scientific">Bos taurus</name>
    <name type="common">Bovine</name>
    <dbReference type="NCBI Taxonomy" id="9913"/>
</organismHost>
<organism>
    <name type="scientific">Vaccinia virus (strain Western Reserve)</name>
    <name type="common">VACV</name>
    <name type="synonym">Vaccinia virus (strain WR)</name>
    <dbReference type="NCBI Taxonomy" id="10254"/>
    <lineage>
        <taxon>Viruses</taxon>
        <taxon>Varidnaviria</taxon>
        <taxon>Bamfordvirae</taxon>
        <taxon>Nucleocytoviricota</taxon>
        <taxon>Pokkesviricetes</taxon>
        <taxon>Chitovirales</taxon>
        <taxon>Poxviridae</taxon>
        <taxon>Chordopoxvirinae</taxon>
        <taxon>Orthopoxvirus</taxon>
        <taxon>Vaccinia virus</taxon>
    </lineage>
</organism>